<evidence type="ECO:0000255" key="1"/>
<evidence type="ECO:0000255" key="2">
    <source>
        <dbReference type="PROSITE-ProRule" id="PRU00156"/>
    </source>
</evidence>
<evidence type="ECO:0000269" key="3">
    <source>
    </source>
</evidence>
<evidence type="ECO:0000269" key="4">
    <source>
    </source>
</evidence>
<evidence type="ECO:0000269" key="5">
    <source>
    </source>
</evidence>
<evidence type="ECO:0000303" key="6">
    <source>
    </source>
</evidence>
<evidence type="ECO:0000305" key="7"/>
<evidence type="ECO:0000305" key="8">
    <source>
    </source>
</evidence>
<comment type="function">
    <text evidence="4">PPIases accelerate the folding of proteins. It catalyzes the cis-trans isomerization of proline imidic peptide bonds in oligopeptides. May be involved during embryogenesis and organ development by regulating the folding of EMB30/GNOM, and thus, by modulating its activity.</text>
</comment>
<comment type="catalytic activity">
    <reaction evidence="8">
        <text>[protein]-peptidylproline (omega=180) = [protein]-peptidylproline (omega=0)</text>
        <dbReference type="Rhea" id="RHEA:16237"/>
        <dbReference type="Rhea" id="RHEA-COMP:10747"/>
        <dbReference type="Rhea" id="RHEA-COMP:10748"/>
        <dbReference type="ChEBI" id="CHEBI:83833"/>
        <dbReference type="ChEBI" id="CHEBI:83834"/>
        <dbReference type="EC" id="5.2.1.8"/>
    </reaction>
</comment>
<comment type="activity regulation">
    <text evidence="4">Binds cyclosporin A (CsA). CsA mediates some of its effects via an inhibitory action on PPIase.</text>
</comment>
<comment type="subunit">
    <text evidence="4">Interacts with EMB30/GNOM.</text>
</comment>
<comment type="interaction">
    <interactant intactId="EBI-2320844">
        <id>Q8LDP4</id>
    </interactant>
    <interactant intactId="EBI-1998836">
        <id>Q42510</id>
        <label>GN</label>
    </interactant>
    <organismsDiffer>false</organismsDiffer>
    <experiments>6</experiments>
</comment>
<comment type="subcellular location">
    <subcellularLocation>
        <location evidence="4">Cytoplasm</location>
    </subcellularLocation>
    <subcellularLocation>
        <location evidence="4">Membrane</location>
    </subcellularLocation>
    <subcellularLocation>
        <location evidence="3">Endoplasmic reticulum</location>
    </subcellularLocation>
    <subcellularLocation>
        <location evidence="3">Secreted</location>
    </subcellularLocation>
    <text evidence="3 4">Mostly cytoplasmic, also membrane-associated (PubMed:10715321). Present in endoplasmic reticulum and barely secreted (PubMed:10189705).</text>
</comment>
<comment type="alternative products">
    <event type="alternative splicing"/>
    <isoform>
        <id>Q8LDP4-1</id>
        <name>1</name>
        <sequence type="displayed"/>
    </isoform>
    <isoform>
        <id>Q8LDP4-2</id>
        <name>2</name>
        <sequence type="described" ref="VSP_055386"/>
    </isoform>
</comment>
<comment type="tissue specificity">
    <text evidence="3 4 5">Ubiquitous, mostly in aerial organs (at protein level).</text>
</comment>
<comment type="developmental stage">
    <text evidence="3 4">Mostly expressed in both apical and basal regions in peduncles and stems (including upper roots) before the bolting stage. Later restricted in the apical region. During embryogenesis, accumulates in all cells during globular stage. From the heart stage, more expressed in inner cells than in epidermal cells (at protein level).</text>
</comment>
<comment type="induction">
    <text evidence="3 5">Up-regulated by cold, salt and cytokinin treatment.</text>
</comment>
<comment type="similarity">
    <text evidence="7">Belongs to the cyclophilin-type PPIase family.</text>
</comment>
<reference key="1">
    <citation type="journal article" date="1999" name="Plant Cell Physiol.">
        <title>Expression of a gene for cyclophilin which contains an amino-terminal endoplasmic reticulum-targeting signal.</title>
        <authorList>
            <person name="Saito T."/>
            <person name="Niwa Y."/>
            <person name="Ashida H."/>
            <person name="Tanaka K."/>
            <person name="Kawamukai M."/>
            <person name="Matsuda H."/>
            <person name="Nakagawa T."/>
        </authorList>
    </citation>
    <scope>NUCLEOTIDE SEQUENCE [GENOMIC DNA]</scope>
    <scope>TISSUE SPECIFICITY</scope>
    <scope>DEVELOPMENTAL STAGE</scope>
    <scope>SUBCELLULAR LOCATION</scope>
    <scope>INDUCTION</scope>
    <source>
        <strain>cv. Landsberg erecta</strain>
    </source>
</reference>
<reference key="2">
    <citation type="journal article" date="1999" name="Nature">
        <title>Sequence and analysis of chromosome 2 of the plant Arabidopsis thaliana.</title>
        <authorList>
            <person name="Lin X."/>
            <person name="Kaul S."/>
            <person name="Rounsley S.D."/>
            <person name="Shea T.P."/>
            <person name="Benito M.-I."/>
            <person name="Town C.D."/>
            <person name="Fujii C.Y."/>
            <person name="Mason T.M."/>
            <person name="Bowman C.L."/>
            <person name="Barnstead M.E."/>
            <person name="Feldblyum T.V."/>
            <person name="Buell C.R."/>
            <person name="Ketchum K.A."/>
            <person name="Lee J.J."/>
            <person name="Ronning C.M."/>
            <person name="Koo H.L."/>
            <person name="Moffat K.S."/>
            <person name="Cronin L.A."/>
            <person name="Shen M."/>
            <person name="Pai G."/>
            <person name="Van Aken S."/>
            <person name="Umayam L."/>
            <person name="Tallon L.J."/>
            <person name="Gill J.E."/>
            <person name="Adams M.D."/>
            <person name="Carrera A.J."/>
            <person name="Creasy T.H."/>
            <person name="Goodman H.M."/>
            <person name="Somerville C.R."/>
            <person name="Copenhaver G.P."/>
            <person name="Preuss D."/>
            <person name="Nierman W.C."/>
            <person name="White O."/>
            <person name="Eisen J.A."/>
            <person name="Salzberg S.L."/>
            <person name="Fraser C.M."/>
            <person name="Venter J.C."/>
        </authorList>
    </citation>
    <scope>NUCLEOTIDE SEQUENCE [LARGE SCALE GENOMIC DNA]</scope>
    <source>
        <strain>cv. Columbia</strain>
    </source>
</reference>
<reference key="3">
    <citation type="journal article" date="2017" name="Plant J.">
        <title>Araport11: a complete reannotation of the Arabidopsis thaliana reference genome.</title>
        <authorList>
            <person name="Cheng C.Y."/>
            <person name="Krishnakumar V."/>
            <person name="Chan A.P."/>
            <person name="Thibaud-Nissen F."/>
            <person name="Schobel S."/>
            <person name="Town C.D."/>
        </authorList>
    </citation>
    <scope>GENOME REANNOTATION</scope>
    <source>
        <strain>cv. Columbia</strain>
    </source>
</reference>
<reference key="4">
    <citation type="journal article" date="2003" name="Science">
        <title>Empirical analysis of transcriptional activity in the Arabidopsis genome.</title>
        <authorList>
            <person name="Yamada K."/>
            <person name="Lim J."/>
            <person name="Dale J.M."/>
            <person name="Chen H."/>
            <person name="Shinn P."/>
            <person name="Palm C.J."/>
            <person name="Southwick A.M."/>
            <person name="Wu H.C."/>
            <person name="Kim C.J."/>
            <person name="Nguyen M."/>
            <person name="Pham P.K."/>
            <person name="Cheuk R.F."/>
            <person name="Karlin-Newmann G."/>
            <person name="Liu S.X."/>
            <person name="Lam B."/>
            <person name="Sakano H."/>
            <person name="Wu T."/>
            <person name="Yu G."/>
            <person name="Miranda M."/>
            <person name="Quach H.L."/>
            <person name="Tripp M."/>
            <person name="Chang C.H."/>
            <person name="Lee J.M."/>
            <person name="Toriumi M.J."/>
            <person name="Chan M.M."/>
            <person name="Tang C.C."/>
            <person name="Onodera C.S."/>
            <person name="Deng J.M."/>
            <person name="Akiyama K."/>
            <person name="Ansari Y."/>
            <person name="Arakawa T."/>
            <person name="Banh J."/>
            <person name="Banno F."/>
            <person name="Bowser L."/>
            <person name="Brooks S.Y."/>
            <person name="Carninci P."/>
            <person name="Chao Q."/>
            <person name="Choy N."/>
            <person name="Enju A."/>
            <person name="Goldsmith A.D."/>
            <person name="Gurjal M."/>
            <person name="Hansen N.F."/>
            <person name="Hayashizaki Y."/>
            <person name="Johnson-Hopson C."/>
            <person name="Hsuan V.W."/>
            <person name="Iida K."/>
            <person name="Karnes M."/>
            <person name="Khan S."/>
            <person name="Koesema E."/>
            <person name="Ishida J."/>
            <person name="Jiang P.X."/>
            <person name="Jones T."/>
            <person name="Kawai J."/>
            <person name="Kamiya A."/>
            <person name="Meyers C."/>
            <person name="Nakajima M."/>
            <person name="Narusaka M."/>
            <person name="Seki M."/>
            <person name="Sakurai T."/>
            <person name="Satou M."/>
            <person name="Tamse R."/>
            <person name="Vaysberg M."/>
            <person name="Wallender E.K."/>
            <person name="Wong C."/>
            <person name="Yamamura Y."/>
            <person name="Yuan S."/>
            <person name="Shinozaki K."/>
            <person name="Davis R.W."/>
            <person name="Theologis A."/>
            <person name="Ecker J.R."/>
        </authorList>
    </citation>
    <scope>NUCLEOTIDE SEQUENCE [LARGE SCALE MRNA] (ISOFORM 1)</scope>
    <source>
        <strain>cv. Columbia</strain>
    </source>
</reference>
<reference key="5">
    <citation type="submission" date="2002-03" db="EMBL/GenBank/DDBJ databases">
        <title>Full-length cDNA from Arabidopsis thaliana.</title>
        <authorList>
            <person name="Brover V.V."/>
            <person name="Troukhan M.E."/>
            <person name="Alexandrov N.A."/>
            <person name="Lu Y.-P."/>
            <person name="Flavell R.B."/>
            <person name="Feldmann K.A."/>
        </authorList>
    </citation>
    <scope>NUCLEOTIDE SEQUENCE [LARGE SCALE MRNA] (ISOFORM 1)</scope>
</reference>
<reference key="6">
    <citation type="journal article" date="2000" name="Plant Cell">
        <title>A conserved domain of the Arabidopsis GNOM protein mediates subunit interaction and cyclophilin 5 binding.</title>
        <authorList>
            <person name="Grebe M."/>
            <person name="Gadea J."/>
            <person name="Steinmann T."/>
            <person name="Kientz M."/>
            <person name="Rahfeld J.-U."/>
            <person name="Salchert K."/>
            <person name="Koncz C."/>
            <person name="Juergens G."/>
        </authorList>
    </citation>
    <scope>FUNCTION</scope>
    <scope>CATALYTIC ACTIVITY</scope>
    <scope>ACTIVITY REGULATION</scope>
    <scope>SUBCELLULAR LOCATION</scope>
    <scope>TISSUE SPECIFICITY</scope>
    <scope>DEVELOPMENTAL STAGE</scope>
    <scope>INTERACTION WITH EMB30/GNOM</scope>
</reference>
<reference key="7">
    <citation type="journal article" date="2004" name="Plant Physiol.">
        <title>Immunophilins and parvulins. Superfamily of peptidyl prolyl isomerases in Arabidopsis.</title>
        <authorList>
            <person name="He Z."/>
            <person name="Li L."/>
            <person name="Luan S."/>
        </authorList>
    </citation>
    <scope>TISSUE SPECIFICITY</scope>
    <scope>GENE FAMILY</scope>
    <scope>NOMENCLATURE</scope>
    <scope>INDUCTION</scope>
</reference>
<reference key="8">
    <citation type="journal article" date="2004" name="Plant Physiol.">
        <title>The Arabidopsis cyclophilin gene family.</title>
        <authorList>
            <person name="Romano P.G.N."/>
            <person name="Horton P."/>
            <person name="Gray J.E."/>
        </authorList>
    </citation>
    <scope>GENE FAMILY</scope>
    <scope>NOMENCLATURE</scope>
</reference>
<keyword id="KW-0025">Alternative splicing</keyword>
<keyword id="KW-0143">Chaperone</keyword>
<keyword id="KW-0963">Cytoplasm</keyword>
<keyword id="KW-0256">Endoplasmic reticulum</keyword>
<keyword id="KW-0413">Isomerase</keyword>
<keyword id="KW-0472">Membrane</keyword>
<keyword id="KW-1185">Reference proteome</keyword>
<keyword id="KW-0697">Rotamase</keyword>
<keyword id="KW-0964">Secreted</keyword>
<keyword id="KW-0732">Signal</keyword>
<protein>
    <recommendedName>
        <fullName>Peptidyl-prolyl cis-trans isomerase CYP19-4</fullName>
        <shortName>PPIase CYP19-4</shortName>
        <ecNumber evidence="8">5.2.1.8</ecNumber>
    </recommendedName>
    <alternativeName>
        <fullName>Cyclophilin of 19 kDa 4</fullName>
    </alternativeName>
    <alternativeName>
        <fullName evidence="6">Cyclophilin-5</fullName>
    </alternativeName>
    <alternativeName>
        <fullName>Rotamase CYP19-4</fullName>
    </alternativeName>
</protein>
<sequence>MAKASFILLGTLFLFGAIASIQAKEDLKEVTHKVYFDVEIDGKSAGRVVIGLFGKAVPKTAENFRALCTGEKGVGKSGKPLHYKGSKFHRIIPSFMIQGGDFTHGNGMGGESIYGQKFADENFKLKHTGPGVLSMANSGEDTNGSQFFITTVTTSWLDGRHVVFGKVVQGMDVVYKIEAEGKQSGTPKSKVVIADSGELPL</sequence>
<proteinExistence type="evidence at protein level"/>
<name>CP19D_ARATH</name>
<feature type="signal peptide" evidence="1">
    <location>
        <begin position="1"/>
        <end position="23"/>
    </location>
</feature>
<feature type="chain" id="PRO_0000044626" description="Peptidyl-prolyl cis-trans isomerase CYP19-4">
    <location>
        <begin position="24"/>
        <end position="201"/>
    </location>
</feature>
<feature type="domain" description="PPIase cyclophilin-type" evidence="2">
    <location>
        <begin position="35"/>
        <end position="198"/>
    </location>
</feature>
<feature type="splice variant" id="VSP_055386" description="In isoform 2." evidence="7">
    <location>
        <begin position="131"/>
        <end position="140"/>
    </location>
</feature>
<feature type="sequence conflict" description="In Ref. 1; AAB71401." evidence="7" ref="1">
    <original>V</original>
    <variation>I</variation>
    <location>
        <position position="30"/>
    </location>
</feature>
<dbReference type="EC" id="5.2.1.8" evidence="8"/>
<dbReference type="EMBL" id="AF020433">
    <property type="protein sequence ID" value="AAB71401.1"/>
    <property type="molecule type" value="Genomic_DNA"/>
</dbReference>
<dbReference type="EMBL" id="AC004680">
    <property type="protein sequence ID" value="AAC31856.1"/>
    <property type="molecule type" value="Genomic_DNA"/>
</dbReference>
<dbReference type="EMBL" id="CP002685">
    <property type="protein sequence ID" value="AEC08327.1"/>
    <property type="molecule type" value="Genomic_DNA"/>
</dbReference>
<dbReference type="EMBL" id="CP002685">
    <property type="protein sequence ID" value="AEC08328.1"/>
    <property type="molecule type" value="Genomic_DNA"/>
</dbReference>
<dbReference type="EMBL" id="CP002685">
    <property type="protein sequence ID" value="ANM62829.1"/>
    <property type="molecule type" value="Genomic_DNA"/>
</dbReference>
<dbReference type="EMBL" id="AY054593">
    <property type="protein sequence ID" value="AAK96784.1"/>
    <property type="molecule type" value="mRNA"/>
</dbReference>
<dbReference type="EMBL" id="BT000068">
    <property type="protein sequence ID" value="AAN15387.1"/>
    <property type="molecule type" value="mRNA"/>
</dbReference>
<dbReference type="EMBL" id="AY085875">
    <property type="protein sequence ID" value="AAM63088.1"/>
    <property type="molecule type" value="mRNA"/>
</dbReference>
<dbReference type="PIR" id="T02489">
    <property type="entry name" value="T02489"/>
</dbReference>
<dbReference type="PIR" id="T50837">
    <property type="entry name" value="T50837"/>
</dbReference>
<dbReference type="RefSeq" id="NP_001077978.1">
    <molecule id="Q8LDP4-2"/>
    <property type="nucleotide sequence ID" value="NM_001084509.1"/>
</dbReference>
<dbReference type="RefSeq" id="NP_001318316.1">
    <molecule id="Q8LDP4-1"/>
    <property type="nucleotide sequence ID" value="NM_001336236.1"/>
</dbReference>
<dbReference type="RefSeq" id="NP_180557.1">
    <molecule id="Q8LDP4-1"/>
    <property type="nucleotide sequence ID" value="NM_128550.4"/>
</dbReference>
<dbReference type="SMR" id="Q8LDP4"/>
<dbReference type="BioGRID" id="2896">
    <property type="interactions" value="1"/>
</dbReference>
<dbReference type="FunCoup" id="Q8LDP4">
    <property type="interactions" value="1252"/>
</dbReference>
<dbReference type="IntAct" id="Q8LDP4">
    <property type="interactions" value="1"/>
</dbReference>
<dbReference type="STRING" id="3702.Q8LDP4"/>
<dbReference type="iPTMnet" id="Q8LDP4"/>
<dbReference type="PaxDb" id="3702-AT2G29960.1"/>
<dbReference type="ProMEX" id="Q8LDP4"/>
<dbReference type="ProteomicsDB" id="240832">
    <molecule id="Q8LDP4-1"/>
</dbReference>
<dbReference type="EnsemblPlants" id="AT2G29960.1">
    <molecule id="Q8LDP4-1"/>
    <property type="protein sequence ID" value="AT2G29960.1"/>
    <property type="gene ID" value="AT2G29960"/>
</dbReference>
<dbReference type="EnsemblPlants" id="AT2G29960.2">
    <molecule id="Q8LDP4-2"/>
    <property type="protein sequence ID" value="AT2G29960.2"/>
    <property type="gene ID" value="AT2G29960"/>
</dbReference>
<dbReference type="EnsemblPlants" id="AT2G29960.3">
    <molecule id="Q8LDP4-1"/>
    <property type="protein sequence ID" value="AT2G29960.3"/>
    <property type="gene ID" value="AT2G29960"/>
</dbReference>
<dbReference type="GeneID" id="817546"/>
<dbReference type="Gramene" id="AT2G29960.1">
    <molecule id="Q8LDP4-1"/>
    <property type="protein sequence ID" value="AT2G29960.1"/>
    <property type="gene ID" value="AT2G29960"/>
</dbReference>
<dbReference type="Gramene" id="AT2G29960.2">
    <molecule id="Q8LDP4-2"/>
    <property type="protein sequence ID" value="AT2G29960.2"/>
    <property type="gene ID" value="AT2G29960"/>
</dbReference>
<dbReference type="Gramene" id="AT2G29960.3">
    <molecule id="Q8LDP4-1"/>
    <property type="protein sequence ID" value="AT2G29960.3"/>
    <property type="gene ID" value="AT2G29960"/>
</dbReference>
<dbReference type="KEGG" id="ath:AT2G29960"/>
<dbReference type="Araport" id="AT2G29960"/>
<dbReference type="TAIR" id="AT2G29960">
    <property type="gene designation" value="CYP5"/>
</dbReference>
<dbReference type="eggNOG" id="KOG0865">
    <property type="taxonomic scope" value="Eukaryota"/>
</dbReference>
<dbReference type="HOGENOM" id="CLU_012062_4_2_1"/>
<dbReference type="InParanoid" id="Q8LDP4"/>
<dbReference type="OMA" id="ENHEITH"/>
<dbReference type="OrthoDB" id="193499at2759"/>
<dbReference type="PhylomeDB" id="Q8LDP4"/>
<dbReference type="PRO" id="PR:Q8LDP4"/>
<dbReference type="Proteomes" id="UP000006548">
    <property type="component" value="Chromosome 2"/>
</dbReference>
<dbReference type="ExpressionAtlas" id="Q8LDP4">
    <property type="expression patterns" value="baseline and differential"/>
</dbReference>
<dbReference type="GO" id="GO:0005829">
    <property type="term" value="C:cytosol"/>
    <property type="evidence" value="ECO:0000314"/>
    <property type="project" value="TAIR"/>
</dbReference>
<dbReference type="GO" id="GO:0005783">
    <property type="term" value="C:endoplasmic reticulum"/>
    <property type="evidence" value="ECO:0000314"/>
    <property type="project" value="TAIR"/>
</dbReference>
<dbReference type="GO" id="GO:0005576">
    <property type="term" value="C:extracellular region"/>
    <property type="evidence" value="ECO:0007669"/>
    <property type="project" value="UniProtKB-SubCell"/>
</dbReference>
<dbReference type="GO" id="GO:0005795">
    <property type="term" value="C:Golgi stack"/>
    <property type="evidence" value="ECO:0000314"/>
    <property type="project" value="TAIR"/>
</dbReference>
<dbReference type="GO" id="GO:0016020">
    <property type="term" value="C:membrane"/>
    <property type="evidence" value="ECO:0000314"/>
    <property type="project" value="TAIR"/>
</dbReference>
<dbReference type="GO" id="GO:0005771">
    <property type="term" value="C:multivesicular body"/>
    <property type="evidence" value="ECO:0000314"/>
    <property type="project" value="TAIR"/>
</dbReference>
<dbReference type="GO" id="GO:0005777">
    <property type="term" value="C:peroxisome"/>
    <property type="evidence" value="ECO:0007005"/>
    <property type="project" value="TAIR"/>
</dbReference>
<dbReference type="GO" id="GO:0099503">
    <property type="term" value="C:secretory vesicle"/>
    <property type="evidence" value="ECO:0007005"/>
    <property type="project" value="TAIR"/>
</dbReference>
<dbReference type="GO" id="GO:0003755">
    <property type="term" value="F:peptidyl-prolyl cis-trans isomerase activity"/>
    <property type="evidence" value="ECO:0000314"/>
    <property type="project" value="TAIR"/>
</dbReference>
<dbReference type="GO" id="GO:0006457">
    <property type="term" value="P:protein folding"/>
    <property type="evidence" value="ECO:0007669"/>
    <property type="project" value="InterPro"/>
</dbReference>
<dbReference type="GO" id="GO:0061083">
    <property type="term" value="P:regulation of protein refolding"/>
    <property type="evidence" value="ECO:0000314"/>
    <property type="project" value="UniProtKB"/>
</dbReference>
<dbReference type="CDD" id="cd01926">
    <property type="entry name" value="cyclophilin_ABH_like"/>
    <property type="match status" value="1"/>
</dbReference>
<dbReference type="FunFam" id="2.40.100.10:FF:000002">
    <property type="entry name" value="Peptidyl-prolyl cis-trans isomerase"/>
    <property type="match status" value="1"/>
</dbReference>
<dbReference type="Gene3D" id="2.40.100.10">
    <property type="entry name" value="Cyclophilin-like"/>
    <property type="match status" value="1"/>
</dbReference>
<dbReference type="InterPro" id="IPR029000">
    <property type="entry name" value="Cyclophilin-like_dom_sf"/>
</dbReference>
<dbReference type="InterPro" id="IPR024936">
    <property type="entry name" value="Cyclophilin-type_PPIase"/>
</dbReference>
<dbReference type="InterPro" id="IPR020892">
    <property type="entry name" value="Cyclophilin-type_PPIase_CS"/>
</dbReference>
<dbReference type="InterPro" id="IPR002130">
    <property type="entry name" value="Cyclophilin-type_PPIase_dom"/>
</dbReference>
<dbReference type="PANTHER" id="PTHR11071">
    <property type="entry name" value="PEPTIDYL-PROLYL CIS-TRANS ISOMERASE"/>
    <property type="match status" value="1"/>
</dbReference>
<dbReference type="PANTHER" id="PTHR11071:SF562">
    <property type="entry name" value="PEPTIDYL-PROLYL CIS-TRANS ISOMERASE CYP19-4"/>
    <property type="match status" value="1"/>
</dbReference>
<dbReference type="Pfam" id="PF00160">
    <property type="entry name" value="Pro_isomerase"/>
    <property type="match status" value="1"/>
</dbReference>
<dbReference type="PIRSF" id="PIRSF001467">
    <property type="entry name" value="Peptidylpro_ismrse"/>
    <property type="match status" value="1"/>
</dbReference>
<dbReference type="PRINTS" id="PR00153">
    <property type="entry name" value="CSAPPISMRASE"/>
</dbReference>
<dbReference type="SUPFAM" id="SSF50891">
    <property type="entry name" value="Cyclophilin-like"/>
    <property type="match status" value="1"/>
</dbReference>
<dbReference type="PROSITE" id="PS00170">
    <property type="entry name" value="CSA_PPIASE_1"/>
    <property type="match status" value="1"/>
</dbReference>
<dbReference type="PROSITE" id="PS50072">
    <property type="entry name" value="CSA_PPIASE_2"/>
    <property type="match status" value="1"/>
</dbReference>
<organism>
    <name type="scientific">Arabidopsis thaliana</name>
    <name type="common">Mouse-ear cress</name>
    <dbReference type="NCBI Taxonomy" id="3702"/>
    <lineage>
        <taxon>Eukaryota</taxon>
        <taxon>Viridiplantae</taxon>
        <taxon>Streptophyta</taxon>
        <taxon>Embryophyta</taxon>
        <taxon>Tracheophyta</taxon>
        <taxon>Spermatophyta</taxon>
        <taxon>Magnoliopsida</taxon>
        <taxon>eudicotyledons</taxon>
        <taxon>Gunneridae</taxon>
        <taxon>Pentapetalae</taxon>
        <taxon>rosids</taxon>
        <taxon>malvids</taxon>
        <taxon>Brassicales</taxon>
        <taxon>Brassicaceae</taxon>
        <taxon>Camelineae</taxon>
        <taxon>Arabidopsis</taxon>
    </lineage>
</organism>
<accession>Q8LDP4</accession>
<accession>A8MS66</accession>
<accession>O22515</accession>
<accession>O80876</accession>
<gene>
    <name type="primary">CYP19-4</name>
    <name evidence="6" type="synonym">CYP5</name>
    <name type="ordered locus">At2g29960</name>
    <name type="ORF">F23F1.12</name>
</gene>